<keyword id="KW-0067">ATP-binding</keyword>
<keyword id="KW-0227">DNA damage</keyword>
<keyword id="KW-0234">DNA repair</keyword>
<keyword id="KW-0238">DNA-binding</keyword>
<keyword id="KW-0460">Magnesium</keyword>
<keyword id="KW-0547">Nucleotide-binding</keyword>
<keyword id="KW-0548">Nucleotidyltransferase</keyword>
<keyword id="KW-1185">Reference proteome</keyword>
<keyword id="KW-0808">Transferase</keyword>
<gene>
    <name evidence="1" type="primary">disA</name>
    <name type="ordered locus">CA_C3187</name>
</gene>
<sequence>MNDLRLKKDRKLLEILKTMAPGTDMREGLENILRAKTGGLVVLGDNEEVMKLSDGGFKINSEYSASYIYELAKMDGAIILSSDLKKIVRANVQLVPDSSIPTFETGTRHRTAHRVAKQTGNVVVAISQRRNVITIYKDDIKYILRDSSIILARANQAIQTLEKYVAVLDRVMGNLNLLEFEDLCTLHDVVAAIQRTEMVMRVVTEIDRYICELGNEGRLISMQLNELVKNVEQDGMLIIRDYCQNEMNYSKVCETIQSMSSEEFLNSEAISKVMGYGDVPLIDTLISPRGYRMTSKIPRIPFIVIENLVKNFKELKKILEASHEDLDKVEGIGEARARAIKSGLRKLKEQTIIRKQL</sequence>
<feature type="chain" id="PRO_0000255640" description="DNA integrity scanning protein DisA">
    <location>
        <begin position="1"/>
        <end position="357"/>
    </location>
</feature>
<feature type="domain" description="DAC" evidence="2">
    <location>
        <begin position="9"/>
        <end position="147"/>
    </location>
</feature>
<feature type="binding site" evidence="1">
    <location>
        <position position="76"/>
    </location>
    <ligand>
        <name>ATP</name>
        <dbReference type="ChEBI" id="CHEBI:30616"/>
    </ligand>
</feature>
<feature type="binding site" evidence="1">
    <location>
        <position position="94"/>
    </location>
    <ligand>
        <name>ATP</name>
        <dbReference type="ChEBI" id="CHEBI:30616"/>
    </ligand>
</feature>
<feature type="binding site" evidence="1">
    <location>
        <begin position="107"/>
        <end position="111"/>
    </location>
    <ligand>
        <name>ATP</name>
        <dbReference type="ChEBI" id="CHEBI:30616"/>
    </ligand>
</feature>
<comment type="function">
    <text evidence="1">Participates in a DNA-damage check-point that is active prior to asymmetric division when DNA is damaged. DisA forms globular foci that rapidly scan along the chromosomes during sporulation, searching for lesions. When a lesion is present, DisA pauses at the lesion site. This triggers a cellular response that culminates in a temporary block in sporulation initiation.</text>
</comment>
<comment type="function">
    <text evidence="1">Also has diadenylate cyclase activity, catalyzing the condensation of 2 ATP molecules into cyclic di-AMP (c-di-AMP). c-di-AMP acts as a signaling molecule that couples DNA integrity with progression of sporulation. The rise in c-di-AMP level generated by DisA while scanning the chromosome, operates as a positive signal that advances sporulation; upon encountering a lesion, the DisA focus arrests at the damaged site and halts c-di-AMP synthesis.</text>
</comment>
<comment type="catalytic activity">
    <reaction evidence="1">
        <text>2 ATP = 3',3'-c-di-AMP + 2 diphosphate</text>
        <dbReference type="Rhea" id="RHEA:35655"/>
        <dbReference type="ChEBI" id="CHEBI:30616"/>
        <dbReference type="ChEBI" id="CHEBI:33019"/>
        <dbReference type="ChEBI" id="CHEBI:71500"/>
        <dbReference type="EC" id="2.7.7.85"/>
    </reaction>
</comment>
<comment type="cofactor">
    <cofactor evidence="1">
        <name>Mg(2+)</name>
        <dbReference type="ChEBI" id="CHEBI:18420"/>
    </cofactor>
</comment>
<comment type="subunit">
    <text evidence="1">Homooctamer.</text>
</comment>
<comment type="similarity">
    <text evidence="1">Belongs to the DisA family.</text>
</comment>
<proteinExistence type="inferred from homology"/>
<dbReference type="EC" id="2.7.7.85" evidence="1"/>
<dbReference type="EMBL" id="AE001437">
    <property type="protein sequence ID" value="AAK81124.1"/>
    <property type="molecule type" value="Genomic_DNA"/>
</dbReference>
<dbReference type="PIR" id="A97292">
    <property type="entry name" value="A97292"/>
</dbReference>
<dbReference type="RefSeq" id="NP_349784.1">
    <property type="nucleotide sequence ID" value="NC_003030.1"/>
</dbReference>
<dbReference type="RefSeq" id="WP_010966464.1">
    <property type="nucleotide sequence ID" value="NC_003030.1"/>
</dbReference>
<dbReference type="SMR" id="Q97EC6"/>
<dbReference type="STRING" id="272562.CA_C3187"/>
<dbReference type="GeneID" id="44999674"/>
<dbReference type="KEGG" id="cac:CA_C3187"/>
<dbReference type="PATRIC" id="fig|272562.8.peg.3367"/>
<dbReference type="eggNOG" id="COG1623">
    <property type="taxonomic scope" value="Bacteria"/>
</dbReference>
<dbReference type="HOGENOM" id="CLU_787128_0_0_9"/>
<dbReference type="OrthoDB" id="41841at2"/>
<dbReference type="Proteomes" id="UP000000814">
    <property type="component" value="Chromosome"/>
</dbReference>
<dbReference type="GO" id="GO:0004016">
    <property type="term" value="F:adenylate cyclase activity"/>
    <property type="evidence" value="ECO:0007669"/>
    <property type="project" value="TreeGrafter"/>
</dbReference>
<dbReference type="GO" id="GO:0005524">
    <property type="term" value="F:ATP binding"/>
    <property type="evidence" value="ECO:0007669"/>
    <property type="project" value="UniProtKB-UniRule"/>
</dbReference>
<dbReference type="GO" id="GO:0140097">
    <property type="term" value="F:catalytic activity, acting on DNA"/>
    <property type="evidence" value="ECO:0007669"/>
    <property type="project" value="UniProtKB-ARBA"/>
</dbReference>
<dbReference type="GO" id="GO:0106408">
    <property type="term" value="F:diadenylate cyclase activity"/>
    <property type="evidence" value="ECO:0007669"/>
    <property type="project" value="UniProtKB-EC"/>
</dbReference>
<dbReference type="GO" id="GO:0003677">
    <property type="term" value="F:DNA binding"/>
    <property type="evidence" value="ECO:0007669"/>
    <property type="project" value="UniProtKB-UniRule"/>
</dbReference>
<dbReference type="GO" id="GO:0016787">
    <property type="term" value="F:hydrolase activity"/>
    <property type="evidence" value="ECO:0007669"/>
    <property type="project" value="UniProtKB-ARBA"/>
</dbReference>
<dbReference type="GO" id="GO:0006281">
    <property type="term" value="P:DNA repair"/>
    <property type="evidence" value="ECO:0007669"/>
    <property type="project" value="UniProtKB-UniRule"/>
</dbReference>
<dbReference type="FunFam" id="3.40.1700.10:FF:000001">
    <property type="entry name" value="DNA integrity scanning protein DisA"/>
    <property type="match status" value="1"/>
</dbReference>
<dbReference type="Gene3D" id="1.10.150.20">
    <property type="entry name" value="5' to 3' exonuclease, C-terminal subdomain"/>
    <property type="match status" value="1"/>
</dbReference>
<dbReference type="Gene3D" id="1.20.1260.110">
    <property type="entry name" value="DNA integrity scanning linker region"/>
    <property type="match status" value="1"/>
</dbReference>
<dbReference type="Gene3D" id="3.40.1700.10">
    <property type="entry name" value="DNA integrity scanning protein, DisA, N-terminal domain"/>
    <property type="match status" value="1"/>
</dbReference>
<dbReference type="HAMAP" id="MF_01438">
    <property type="entry name" value="DisA"/>
    <property type="match status" value="1"/>
</dbReference>
<dbReference type="InterPro" id="IPR050338">
    <property type="entry name" value="DisA"/>
</dbReference>
<dbReference type="InterPro" id="IPR038331">
    <property type="entry name" value="DisA_sf"/>
</dbReference>
<dbReference type="InterPro" id="IPR036888">
    <property type="entry name" value="DNA_integrity_DisA_N_sf"/>
</dbReference>
<dbReference type="InterPro" id="IPR018906">
    <property type="entry name" value="DNA_integrity_scan_DisA_link"/>
</dbReference>
<dbReference type="InterPro" id="IPR003390">
    <property type="entry name" value="DNA_integrity_scan_DisA_N"/>
</dbReference>
<dbReference type="InterPro" id="IPR023763">
    <property type="entry name" value="DNA_integrity_scanning_protein"/>
</dbReference>
<dbReference type="InterPro" id="IPR000445">
    <property type="entry name" value="HhH_motif"/>
</dbReference>
<dbReference type="InterPro" id="IPR010994">
    <property type="entry name" value="RuvA_2-like"/>
</dbReference>
<dbReference type="NCBIfam" id="NF010009">
    <property type="entry name" value="PRK13482.1"/>
    <property type="match status" value="1"/>
</dbReference>
<dbReference type="PANTHER" id="PTHR34185">
    <property type="entry name" value="DIADENYLATE CYCLASE"/>
    <property type="match status" value="1"/>
</dbReference>
<dbReference type="PANTHER" id="PTHR34185:SF3">
    <property type="entry name" value="DNA INTEGRITY SCANNING PROTEIN DISA"/>
    <property type="match status" value="1"/>
</dbReference>
<dbReference type="Pfam" id="PF02457">
    <property type="entry name" value="DAC"/>
    <property type="match status" value="1"/>
</dbReference>
<dbReference type="Pfam" id="PF10635">
    <property type="entry name" value="DisA-linker"/>
    <property type="match status" value="1"/>
</dbReference>
<dbReference type="Pfam" id="PF00633">
    <property type="entry name" value="HHH"/>
    <property type="match status" value="1"/>
</dbReference>
<dbReference type="SUPFAM" id="SSF47781">
    <property type="entry name" value="RuvA domain 2-like"/>
    <property type="match status" value="1"/>
</dbReference>
<dbReference type="SUPFAM" id="SSF143597">
    <property type="entry name" value="YojJ-like"/>
    <property type="match status" value="1"/>
</dbReference>
<dbReference type="PROSITE" id="PS51794">
    <property type="entry name" value="DAC"/>
    <property type="match status" value="1"/>
</dbReference>
<name>DISA_CLOAB</name>
<protein>
    <recommendedName>
        <fullName evidence="1">DNA integrity scanning protein DisA</fullName>
    </recommendedName>
    <alternativeName>
        <fullName evidence="1">Cyclic di-AMP synthase</fullName>
        <shortName evidence="1">c-di-AMP synthase</shortName>
    </alternativeName>
    <alternativeName>
        <fullName evidence="1">Diadenylate cyclase</fullName>
        <ecNumber evidence="1">2.7.7.85</ecNumber>
    </alternativeName>
</protein>
<reference key="1">
    <citation type="journal article" date="2001" name="J. Bacteriol.">
        <title>Genome sequence and comparative analysis of the solvent-producing bacterium Clostridium acetobutylicum.</title>
        <authorList>
            <person name="Noelling J."/>
            <person name="Breton G."/>
            <person name="Omelchenko M.V."/>
            <person name="Makarova K.S."/>
            <person name="Zeng Q."/>
            <person name="Gibson R."/>
            <person name="Lee H.M."/>
            <person name="Dubois J."/>
            <person name="Qiu D."/>
            <person name="Hitti J."/>
            <person name="Wolf Y.I."/>
            <person name="Tatusov R.L."/>
            <person name="Sabathe F."/>
            <person name="Doucette-Stamm L.A."/>
            <person name="Soucaille P."/>
            <person name="Daly M.J."/>
            <person name="Bennett G.N."/>
            <person name="Koonin E.V."/>
            <person name="Smith D.R."/>
        </authorList>
    </citation>
    <scope>NUCLEOTIDE SEQUENCE [LARGE SCALE GENOMIC DNA]</scope>
    <source>
        <strain>ATCC 824 / DSM 792 / JCM 1419 / IAM 19013 / LMG 5710 / NBRC 13948 / NRRL B-527 / VKM B-1787 / 2291 / W</strain>
    </source>
</reference>
<evidence type="ECO:0000255" key="1">
    <source>
        <dbReference type="HAMAP-Rule" id="MF_01438"/>
    </source>
</evidence>
<evidence type="ECO:0000255" key="2">
    <source>
        <dbReference type="PROSITE-ProRule" id="PRU01130"/>
    </source>
</evidence>
<organism>
    <name type="scientific">Clostridium acetobutylicum (strain ATCC 824 / DSM 792 / JCM 1419 / IAM 19013 / LMG 5710 / NBRC 13948 / NRRL B-527 / VKM B-1787 / 2291 / W)</name>
    <dbReference type="NCBI Taxonomy" id="272562"/>
    <lineage>
        <taxon>Bacteria</taxon>
        <taxon>Bacillati</taxon>
        <taxon>Bacillota</taxon>
        <taxon>Clostridia</taxon>
        <taxon>Eubacteriales</taxon>
        <taxon>Clostridiaceae</taxon>
        <taxon>Clostridium</taxon>
    </lineage>
</organism>
<accession>Q97EC6</accession>